<organism>
    <name type="scientific">Polynucleobacter necessarius subsp. necessarius (strain STIR1)</name>
    <dbReference type="NCBI Taxonomy" id="452638"/>
    <lineage>
        <taxon>Bacteria</taxon>
        <taxon>Pseudomonadati</taxon>
        <taxon>Pseudomonadota</taxon>
        <taxon>Betaproteobacteria</taxon>
        <taxon>Burkholderiales</taxon>
        <taxon>Burkholderiaceae</taxon>
        <taxon>Polynucleobacter</taxon>
    </lineage>
</organism>
<proteinExistence type="inferred from homology"/>
<keyword id="KW-0687">Ribonucleoprotein</keyword>
<keyword id="KW-0689">Ribosomal protein</keyword>
<gene>
    <name evidence="1" type="primary">rpmJ</name>
    <name type="ordered locus">Pnec_0072</name>
</gene>
<accession>B1XSS3</accession>
<name>RL36_POLNS</name>
<feature type="chain" id="PRO_1000101055" description="Large ribosomal subunit protein bL36">
    <location>
        <begin position="1"/>
        <end position="38"/>
    </location>
</feature>
<reference key="1">
    <citation type="journal article" date="2013" name="Proc. Natl. Acad. Sci. U.S.A.">
        <title>Polynucleobacter necessarius, a model for genome reduction in both free-living and symbiotic bacteria.</title>
        <authorList>
            <person name="Boscaro V."/>
            <person name="Felletti M."/>
            <person name="Vannini C."/>
            <person name="Ackerman M.S."/>
            <person name="Chain P.S."/>
            <person name="Malfatti S."/>
            <person name="Vergez L.M."/>
            <person name="Shin M."/>
            <person name="Doak T.G."/>
            <person name="Lynch M."/>
            <person name="Petroni G."/>
        </authorList>
    </citation>
    <scope>NUCLEOTIDE SEQUENCE [LARGE SCALE GENOMIC DNA]</scope>
    <source>
        <strain>STIR1</strain>
    </source>
</reference>
<evidence type="ECO:0000255" key="1">
    <source>
        <dbReference type="HAMAP-Rule" id="MF_00251"/>
    </source>
</evidence>
<evidence type="ECO:0000305" key="2"/>
<comment type="similarity">
    <text evidence="1">Belongs to the bacterial ribosomal protein bL36 family.</text>
</comment>
<dbReference type="EMBL" id="CP001010">
    <property type="protein sequence ID" value="ACB43400.1"/>
    <property type="molecule type" value="Genomic_DNA"/>
</dbReference>
<dbReference type="SMR" id="B1XSS3"/>
<dbReference type="STRING" id="452638.Pnec_0072"/>
<dbReference type="KEGG" id="pne:Pnec_0072"/>
<dbReference type="eggNOG" id="COG0257">
    <property type="taxonomic scope" value="Bacteria"/>
</dbReference>
<dbReference type="HOGENOM" id="CLU_135723_6_2_4"/>
<dbReference type="GO" id="GO:0005737">
    <property type="term" value="C:cytoplasm"/>
    <property type="evidence" value="ECO:0007669"/>
    <property type="project" value="UniProtKB-ARBA"/>
</dbReference>
<dbReference type="GO" id="GO:1990904">
    <property type="term" value="C:ribonucleoprotein complex"/>
    <property type="evidence" value="ECO:0007669"/>
    <property type="project" value="UniProtKB-KW"/>
</dbReference>
<dbReference type="GO" id="GO:0005840">
    <property type="term" value="C:ribosome"/>
    <property type="evidence" value="ECO:0007669"/>
    <property type="project" value="UniProtKB-KW"/>
</dbReference>
<dbReference type="GO" id="GO:0003735">
    <property type="term" value="F:structural constituent of ribosome"/>
    <property type="evidence" value="ECO:0007669"/>
    <property type="project" value="InterPro"/>
</dbReference>
<dbReference type="GO" id="GO:0006412">
    <property type="term" value="P:translation"/>
    <property type="evidence" value="ECO:0007669"/>
    <property type="project" value="UniProtKB-UniRule"/>
</dbReference>
<dbReference type="HAMAP" id="MF_00251">
    <property type="entry name" value="Ribosomal_bL36"/>
    <property type="match status" value="1"/>
</dbReference>
<dbReference type="InterPro" id="IPR000473">
    <property type="entry name" value="Ribosomal_bL36"/>
</dbReference>
<dbReference type="InterPro" id="IPR035977">
    <property type="entry name" value="Ribosomal_bL36_sp"/>
</dbReference>
<dbReference type="NCBIfam" id="TIGR01022">
    <property type="entry name" value="rpmJ_bact"/>
    <property type="match status" value="1"/>
</dbReference>
<dbReference type="PANTHER" id="PTHR42888">
    <property type="entry name" value="50S RIBOSOMAL PROTEIN L36, CHLOROPLASTIC"/>
    <property type="match status" value="1"/>
</dbReference>
<dbReference type="PANTHER" id="PTHR42888:SF1">
    <property type="entry name" value="LARGE RIBOSOMAL SUBUNIT PROTEIN BL36C"/>
    <property type="match status" value="1"/>
</dbReference>
<dbReference type="Pfam" id="PF00444">
    <property type="entry name" value="Ribosomal_L36"/>
    <property type="match status" value="1"/>
</dbReference>
<dbReference type="SUPFAM" id="SSF57840">
    <property type="entry name" value="Ribosomal protein L36"/>
    <property type="match status" value="1"/>
</dbReference>
<dbReference type="PROSITE" id="PS00828">
    <property type="entry name" value="RIBOSOMAL_L36"/>
    <property type="match status" value="1"/>
</dbReference>
<protein>
    <recommendedName>
        <fullName evidence="1">Large ribosomal subunit protein bL36</fullName>
    </recommendedName>
    <alternativeName>
        <fullName evidence="2">50S ribosomal protein L36</fullName>
    </alternativeName>
</protein>
<sequence>MKVLASVKCICRNCKIIKRKRVVRVICSSDARHKQRQG</sequence>